<organism>
    <name type="scientific">Arabidopsis thaliana</name>
    <name type="common">Mouse-ear cress</name>
    <dbReference type="NCBI Taxonomy" id="3702"/>
    <lineage>
        <taxon>Eukaryota</taxon>
        <taxon>Viridiplantae</taxon>
        <taxon>Streptophyta</taxon>
        <taxon>Embryophyta</taxon>
        <taxon>Tracheophyta</taxon>
        <taxon>Spermatophyta</taxon>
        <taxon>Magnoliopsida</taxon>
        <taxon>eudicotyledons</taxon>
        <taxon>Gunneridae</taxon>
        <taxon>Pentapetalae</taxon>
        <taxon>rosids</taxon>
        <taxon>malvids</taxon>
        <taxon>Brassicales</taxon>
        <taxon>Brassicaceae</taxon>
        <taxon>Camelineae</taxon>
        <taxon>Arabidopsis</taxon>
    </lineage>
</organism>
<feature type="chain" id="PRO_0000420272" description="tRNA(His) guanylyltransferase 2">
    <location>
        <begin position="1"/>
        <end position="537"/>
    </location>
</feature>
<feature type="binding site" evidence="1">
    <location>
        <begin position="307"/>
        <end position="312"/>
    </location>
    <ligand>
        <name>GTP</name>
        <dbReference type="ChEBI" id="CHEBI:37565"/>
    </ligand>
</feature>
<feature type="binding site" evidence="1">
    <location>
        <position position="307"/>
    </location>
    <ligand>
        <name>Mg(2+)</name>
        <dbReference type="ChEBI" id="CHEBI:18420"/>
        <label>1</label>
        <note>catalytic</note>
    </ligand>
</feature>
<feature type="binding site" evidence="1">
    <location>
        <position position="307"/>
    </location>
    <ligand>
        <name>Mg(2+)</name>
        <dbReference type="ChEBI" id="CHEBI:18420"/>
        <label>2</label>
        <note>catalytic</note>
    </ligand>
</feature>
<feature type="binding site" evidence="1">
    <location>
        <position position="308"/>
    </location>
    <ligand>
        <name>Mg(2+)</name>
        <dbReference type="ChEBI" id="CHEBI:18420"/>
        <label>1</label>
        <note>catalytic</note>
    </ligand>
</feature>
<feature type="binding site" evidence="1">
    <location>
        <begin position="353"/>
        <end position="354"/>
    </location>
    <ligand>
        <name>GTP</name>
        <dbReference type="ChEBI" id="CHEBI:37565"/>
    </ligand>
</feature>
<feature type="binding site" evidence="1">
    <location>
        <position position="354"/>
    </location>
    <ligand>
        <name>Mg(2+)</name>
        <dbReference type="ChEBI" id="CHEBI:18420"/>
        <label>1</label>
        <note>catalytic</note>
    </ligand>
</feature>
<feature type="binding site" evidence="1">
    <location>
        <position position="354"/>
    </location>
    <ligand>
        <name>Mg(2+)</name>
        <dbReference type="ChEBI" id="CHEBI:18420"/>
        <label>2</label>
        <note>catalytic</note>
    </ligand>
</feature>
<feature type="splice variant" id="VSP_044436" description="In isoform 3." evidence="3">
    <location>
        <begin position="216"/>
        <end position="227"/>
    </location>
</feature>
<feature type="splice variant" id="VSP_044437" description="In isoform 2." evidence="3">
    <original>VIFSIISFFYF</original>
    <variation>KSKSFQ</variation>
    <location>
        <begin position="216"/>
        <end position="226"/>
    </location>
</feature>
<sequence>MANSKYEYVKSFEVEDEVMFPNLIIIRIDGRDFSRFSQVHKFEKPNDETSLNLMNSCASSVLVEYPDIVFAYGYSDEYSFVFKKASRFYQRRASKILSLVASFFAAVYVTKWKEFFPHTKLEYAPSFASKVVSCASVEVLQAYLAWRQHDCHISNQYDTCLWMLVKSGKTLSETQEILKDTQKQQRNELLFQQFGINYKMLPVLFRQGSCLFKTKVIFSIISFFYFLLEETVKHDENGKPVKRLRRRETLVHSENVAGRSFWNEHSSLHKDLGHFAKDIGKIEPDYVKSFQFESRLLPLTWVVVRIDGCHFHRFSEVHEFEKPNDEQALKLMNSCAVAVLEEFQDIAFAYGVSDEFSFVLKNKSELYKRQSSKIISAVVSFFTSTYMMRWGDFFPHKKLKYPPSFDGRAVCYPTSDILLDYLAWRQVDCHINNQYNTCFWMLVKSGKSKIQAQDYLKGTQTREKNELLSQQFGIEYNSLPVIFRMGSSVFRLKTQEGVTEENGEVSGKQVEAEVGVDYSNIIDQCFWQQHPHILSFS</sequence>
<reference key="1">
    <citation type="journal article" date="1999" name="Nature">
        <title>Sequence and analysis of chromosome 2 of the plant Arabidopsis thaliana.</title>
        <authorList>
            <person name="Lin X."/>
            <person name="Kaul S."/>
            <person name="Rounsley S.D."/>
            <person name="Shea T.P."/>
            <person name="Benito M.-I."/>
            <person name="Town C.D."/>
            <person name="Fujii C.Y."/>
            <person name="Mason T.M."/>
            <person name="Bowman C.L."/>
            <person name="Barnstead M.E."/>
            <person name="Feldblyum T.V."/>
            <person name="Buell C.R."/>
            <person name="Ketchum K.A."/>
            <person name="Lee J.J."/>
            <person name="Ronning C.M."/>
            <person name="Koo H.L."/>
            <person name="Moffat K.S."/>
            <person name="Cronin L.A."/>
            <person name="Shen M."/>
            <person name="Pai G."/>
            <person name="Van Aken S."/>
            <person name="Umayam L."/>
            <person name="Tallon L.J."/>
            <person name="Gill J.E."/>
            <person name="Adams M.D."/>
            <person name="Carrera A.J."/>
            <person name="Creasy T.H."/>
            <person name="Goodman H.M."/>
            <person name="Somerville C.R."/>
            <person name="Copenhaver G.P."/>
            <person name="Preuss D."/>
            <person name="Nierman W.C."/>
            <person name="White O."/>
            <person name="Eisen J.A."/>
            <person name="Salzberg S.L."/>
            <person name="Fraser C.M."/>
            <person name="Venter J.C."/>
        </authorList>
    </citation>
    <scope>NUCLEOTIDE SEQUENCE [LARGE SCALE GENOMIC DNA]</scope>
    <source>
        <strain>cv. Columbia</strain>
    </source>
</reference>
<reference key="2">
    <citation type="journal article" date="2017" name="Plant J.">
        <title>Araport11: a complete reannotation of the Arabidopsis thaliana reference genome.</title>
        <authorList>
            <person name="Cheng C.Y."/>
            <person name="Krishnakumar V."/>
            <person name="Chan A.P."/>
            <person name="Thibaud-Nissen F."/>
            <person name="Schobel S."/>
            <person name="Town C.D."/>
        </authorList>
    </citation>
    <scope>GENOME REANNOTATION</scope>
    <source>
        <strain>cv. Columbia</strain>
    </source>
</reference>
<reference key="3">
    <citation type="submission" date="2004-10" db="EMBL/GenBank/DDBJ databases">
        <title>Arabidopsis ORF clones.</title>
        <authorList>
            <person name="Kim C.J."/>
            <person name="Chen H."/>
            <person name="Cheuk R."/>
            <person name="Shinn P."/>
            <person name="Ecker J.R."/>
        </authorList>
    </citation>
    <scope>NUCLEOTIDE SEQUENCE [LARGE SCALE MRNA] OF 1-189</scope>
</reference>
<reference key="4">
    <citation type="journal article" date="2010" name="Nucleic Acids Res.">
        <title>Plant mitochondria use two pathways for the biogenesis of tRNAHis.</title>
        <authorList>
            <person name="Placido A."/>
            <person name="Sieber F."/>
            <person name="Gobert A."/>
            <person name="Gallerani R."/>
            <person name="Giege P."/>
            <person name="Marechal-Drouard L."/>
        </authorList>
    </citation>
    <scope>FUNCTION</scope>
    <scope>CATALYTIC ACTIVITY</scope>
    <scope>SUBCELLULAR LOCATION</scope>
</reference>
<gene>
    <name type="primary">THG2</name>
    <name type="ordered locus">At2g32320</name>
    <name type="ORF">T32F6.16</name>
</gene>
<accession>F4ISV6</accession>
<accession>F4ISV7</accession>
<accession>F4ISV8</accession>
<accession>Q6IDC3</accession>
<accession>Q9ZV60</accession>
<accession>Q9ZV61</accession>
<comment type="function">
    <text evidence="2">Adds a GMP to the 5'-end of tRNA(His) after transcription and RNase P cleavage.</text>
</comment>
<comment type="catalytic activity">
    <reaction evidence="2">
        <text>a 5'-end ribonucleotide-tRNA(His) + GTP + ATP + H2O = a 5'-end phospho-guanosine-ribonucleotide-tRNA(His) + AMP + 2 diphosphate + H(+)</text>
        <dbReference type="Rhea" id="RHEA:54564"/>
        <dbReference type="Rhea" id="RHEA-COMP:14193"/>
        <dbReference type="Rhea" id="RHEA-COMP:14917"/>
        <dbReference type="ChEBI" id="CHEBI:15377"/>
        <dbReference type="ChEBI" id="CHEBI:15378"/>
        <dbReference type="ChEBI" id="CHEBI:30616"/>
        <dbReference type="ChEBI" id="CHEBI:33019"/>
        <dbReference type="ChEBI" id="CHEBI:37565"/>
        <dbReference type="ChEBI" id="CHEBI:138282"/>
        <dbReference type="ChEBI" id="CHEBI:141847"/>
        <dbReference type="ChEBI" id="CHEBI:456215"/>
        <dbReference type="EC" id="2.7.7.79"/>
    </reaction>
</comment>
<comment type="cofactor">
    <cofactor evidence="1">
        <name>Mg(2+)</name>
        <dbReference type="ChEBI" id="CHEBI:18420"/>
    </cofactor>
    <text evidence="1">Binds 2 magnesium ions per subunit.</text>
</comment>
<comment type="subcellular location">
    <subcellularLocation>
        <location evidence="2">Nucleus</location>
        <location evidence="2">Nucleoplasm</location>
    </subcellularLocation>
</comment>
<comment type="alternative products">
    <event type="alternative splicing"/>
    <isoform>
        <id>F4ISV6-1</id>
        <name>1</name>
        <sequence type="displayed"/>
    </isoform>
    <isoform>
        <id>F4ISV6-2</id>
        <name>2</name>
        <sequence type="described" ref="VSP_044437"/>
    </isoform>
    <isoform>
        <id>F4ISV6-3</id>
        <name>3</name>
        <sequence type="described" ref="VSP_044436"/>
    </isoform>
</comment>
<comment type="similarity">
    <text evidence="3">Belongs to the tRNA(His) guanylyltransferase family.</text>
</comment>
<comment type="sequence caution" evidence="3">
    <conflict type="erroneous gene model prediction">
        <sequence resource="EMBL-CDS" id="AAC69945"/>
    </conflict>
</comment>
<comment type="sequence caution" evidence="3">
    <conflict type="erroneous gene model prediction">
        <sequence resource="EMBL-CDS" id="AAC69946"/>
    </conflict>
</comment>
<comment type="sequence caution" evidence="3">
    <conflict type="frameshift">
        <sequence resource="EMBL-CDS" id="AAT41733"/>
    </conflict>
</comment>
<comment type="sequence caution" evidence="3">
    <conflict type="frameshift">
        <sequence resource="EMBL-CDS" id="AAU94397"/>
    </conflict>
</comment>
<protein>
    <recommendedName>
        <fullName>tRNA(His) guanylyltransferase 2</fullName>
        <ecNumber evidence="2">2.7.7.79</ecNumber>
    </recommendedName>
</protein>
<dbReference type="EC" id="2.7.7.79" evidence="2"/>
<dbReference type="EMBL" id="AC005700">
    <property type="protein sequence ID" value="AAC69945.1"/>
    <property type="status" value="ALT_SEQ"/>
    <property type="molecule type" value="Genomic_DNA"/>
</dbReference>
<dbReference type="EMBL" id="AC005700">
    <property type="protein sequence ID" value="AAC69946.1"/>
    <property type="status" value="ALT_SEQ"/>
    <property type="molecule type" value="Genomic_DNA"/>
</dbReference>
<dbReference type="EMBL" id="CP002685">
    <property type="protein sequence ID" value="AEC08668.1"/>
    <property type="molecule type" value="Genomic_DNA"/>
</dbReference>
<dbReference type="EMBL" id="CP002685">
    <property type="protein sequence ID" value="AEC08669.1"/>
    <property type="molecule type" value="Genomic_DNA"/>
</dbReference>
<dbReference type="EMBL" id="CP002685">
    <property type="protein sequence ID" value="AEC08670.1"/>
    <property type="molecule type" value="Genomic_DNA"/>
</dbReference>
<dbReference type="EMBL" id="BT014750">
    <property type="protein sequence ID" value="AAT41733.1"/>
    <property type="status" value="ALT_FRAME"/>
    <property type="molecule type" value="mRNA"/>
</dbReference>
<dbReference type="EMBL" id="BT015834">
    <property type="protein sequence ID" value="AAU94397.1"/>
    <property type="status" value="ALT_FRAME"/>
    <property type="molecule type" value="mRNA"/>
</dbReference>
<dbReference type="PIR" id="F84731">
    <property type="entry name" value="F84731"/>
</dbReference>
<dbReference type="PIR" id="G84731">
    <property type="entry name" value="G84731"/>
</dbReference>
<dbReference type="RefSeq" id="NP_001154544.1">
    <molecule id="F4ISV6-1"/>
    <property type="nucleotide sequence ID" value="NM_001161072.1"/>
</dbReference>
<dbReference type="RefSeq" id="NP_001154545.1">
    <molecule id="F4ISV6-2"/>
    <property type="nucleotide sequence ID" value="NM_001161073.1"/>
</dbReference>
<dbReference type="RefSeq" id="NP_180791.3">
    <molecule id="F4ISV6-3"/>
    <property type="nucleotide sequence ID" value="NM_128791.4"/>
</dbReference>
<dbReference type="SMR" id="F4ISV6"/>
<dbReference type="FunCoup" id="F4ISV6">
    <property type="interactions" value="491"/>
</dbReference>
<dbReference type="STRING" id="3702.F4ISV6"/>
<dbReference type="iPTMnet" id="F4ISV6"/>
<dbReference type="PaxDb" id="3702-AT2G32320.2"/>
<dbReference type="ProteomicsDB" id="234216">
    <molecule id="F4ISV6-1"/>
</dbReference>
<dbReference type="EnsemblPlants" id="AT2G32320.1">
    <molecule id="F4ISV6-3"/>
    <property type="protein sequence ID" value="AT2G32320.1"/>
    <property type="gene ID" value="AT2G32320"/>
</dbReference>
<dbReference type="EnsemblPlants" id="AT2G32320.2">
    <molecule id="F4ISV6-1"/>
    <property type="protein sequence ID" value="AT2G32320.2"/>
    <property type="gene ID" value="AT2G32320"/>
</dbReference>
<dbReference type="EnsemblPlants" id="AT2G32320.3">
    <molecule id="F4ISV6-2"/>
    <property type="protein sequence ID" value="AT2G32320.3"/>
    <property type="gene ID" value="AT2G32320"/>
</dbReference>
<dbReference type="GeneID" id="817793"/>
<dbReference type="Gramene" id="AT2G32320.1">
    <molecule id="F4ISV6-3"/>
    <property type="protein sequence ID" value="AT2G32320.1"/>
    <property type="gene ID" value="AT2G32320"/>
</dbReference>
<dbReference type="Gramene" id="AT2G32320.2">
    <molecule id="F4ISV6-1"/>
    <property type="protein sequence ID" value="AT2G32320.2"/>
    <property type="gene ID" value="AT2G32320"/>
</dbReference>
<dbReference type="Gramene" id="AT2G32320.3">
    <molecule id="F4ISV6-2"/>
    <property type="protein sequence ID" value="AT2G32320.3"/>
    <property type="gene ID" value="AT2G32320"/>
</dbReference>
<dbReference type="KEGG" id="ath:AT2G32320"/>
<dbReference type="Araport" id="AT2G32320"/>
<dbReference type="TAIR" id="AT2G32320">
    <property type="gene designation" value="ICA2"/>
</dbReference>
<dbReference type="eggNOG" id="KOG2721">
    <property type="taxonomic scope" value="Eukaryota"/>
</dbReference>
<dbReference type="HOGENOM" id="CLU_044271_4_0_1"/>
<dbReference type="InParanoid" id="F4ISV6"/>
<dbReference type="OMA" id="KPNDQNA"/>
<dbReference type="PRO" id="PR:F4ISV6"/>
<dbReference type="Proteomes" id="UP000006548">
    <property type="component" value="Chromosome 2"/>
</dbReference>
<dbReference type="ExpressionAtlas" id="F4ISV6">
    <property type="expression patterns" value="baseline and differential"/>
</dbReference>
<dbReference type="GO" id="GO:0005654">
    <property type="term" value="C:nucleoplasm"/>
    <property type="evidence" value="ECO:0000314"/>
    <property type="project" value="UniProtKB"/>
</dbReference>
<dbReference type="GO" id="GO:0005525">
    <property type="term" value="F:GTP binding"/>
    <property type="evidence" value="ECO:0007669"/>
    <property type="project" value="UniProtKB-KW"/>
</dbReference>
<dbReference type="GO" id="GO:0000287">
    <property type="term" value="F:magnesium ion binding"/>
    <property type="evidence" value="ECO:0007669"/>
    <property type="project" value="InterPro"/>
</dbReference>
<dbReference type="GO" id="GO:0008193">
    <property type="term" value="F:tRNA guanylyltransferase activity"/>
    <property type="evidence" value="ECO:0000304"/>
    <property type="project" value="UniProtKB"/>
</dbReference>
<dbReference type="GO" id="GO:0006400">
    <property type="term" value="P:tRNA modification"/>
    <property type="evidence" value="ECO:0000304"/>
    <property type="project" value="UniProtKB"/>
</dbReference>
<dbReference type="FunFam" id="3.30.70.3000:FF:000002">
    <property type="entry name" value="tRNA(His) guanylyltransferase 1"/>
    <property type="match status" value="2"/>
</dbReference>
<dbReference type="Gene3D" id="3.30.70.3000">
    <property type="match status" value="2"/>
</dbReference>
<dbReference type="InterPro" id="IPR025845">
    <property type="entry name" value="Thg1_C_dom"/>
</dbReference>
<dbReference type="InterPro" id="IPR024956">
    <property type="entry name" value="tRNAHis_GuaTrfase_cat"/>
</dbReference>
<dbReference type="InterPro" id="IPR007537">
    <property type="entry name" value="tRNAHis_GuaTrfase_Thg1"/>
</dbReference>
<dbReference type="InterPro" id="IPR038469">
    <property type="entry name" value="tRNAHis_GuaTrfase_Thg1_sf"/>
</dbReference>
<dbReference type="PANTHER" id="PTHR12729">
    <property type="entry name" value="TRNA(HIS) GUANYLYLTRANSFERASE-RELATED"/>
    <property type="match status" value="1"/>
</dbReference>
<dbReference type="PANTHER" id="PTHR12729:SF6">
    <property type="entry name" value="TRNA(HIS) GUANYLYLTRANSFERASE-RELATED"/>
    <property type="match status" value="1"/>
</dbReference>
<dbReference type="Pfam" id="PF04446">
    <property type="entry name" value="Thg1"/>
    <property type="match status" value="2"/>
</dbReference>
<dbReference type="Pfam" id="PF14413">
    <property type="entry name" value="Thg1C"/>
    <property type="match status" value="2"/>
</dbReference>
<evidence type="ECO:0000250" key="1"/>
<evidence type="ECO:0000269" key="2">
    <source>
    </source>
</evidence>
<evidence type="ECO:0000305" key="3"/>
<keyword id="KW-0025">Alternative splicing</keyword>
<keyword id="KW-0342">GTP-binding</keyword>
<keyword id="KW-0460">Magnesium</keyword>
<keyword id="KW-0479">Metal-binding</keyword>
<keyword id="KW-0547">Nucleotide-binding</keyword>
<keyword id="KW-0548">Nucleotidyltransferase</keyword>
<keyword id="KW-0539">Nucleus</keyword>
<keyword id="KW-1185">Reference proteome</keyword>
<keyword id="KW-0808">Transferase</keyword>
<keyword id="KW-0819">tRNA processing</keyword>
<proteinExistence type="evidence at protein level"/>
<name>THG2_ARATH</name>